<name>PDXH_ACTP7</name>
<protein>
    <recommendedName>
        <fullName evidence="1">Pyridoxine/pyridoxamine 5'-phosphate oxidase</fullName>
        <ecNumber evidence="1">1.4.3.5</ecNumber>
    </recommendedName>
    <alternativeName>
        <fullName evidence="1">PNP/PMP oxidase</fullName>
        <shortName evidence="1">PNPOx</shortName>
    </alternativeName>
    <alternativeName>
        <fullName evidence="1">Pyridoxal 5'-phosphate synthase</fullName>
    </alternativeName>
</protein>
<organism>
    <name type="scientific">Actinobacillus pleuropneumoniae serotype 7 (strain AP76)</name>
    <dbReference type="NCBI Taxonomy" id="537457"/>
    <lineage>
        <taxon>Bacteria</taxon>
        <taxon>Pseudomonadati</taxon>
        <taxon>Pseudomonadota</taxon>
        <taxon>Gammaproteobacteria</taxon>
        <taxon>Pasteurellales</taxon>
        <taxon>Pasteurellaceae</taxon>
        <taxon>Actinobacillus</taxon>
    </lineage>
</organism>
<dbReference type="EC" id="1.4.3.5" evidence="1"/>
<dbReference type="EMBL" id="CP001091">
    <property type="protein sequence ID" value="ACE62748.1"/>
    <property type="molecule type" value="Genomic_DNA"/>
</dbReference>
<dbReference type="RefSeq" id="WP_005618445.1">
    <property type="nucleotide sequence ID" value="NC_010939.1"/>
</dbReference>
<dbReference type="SMR" id="B3GZF5"/>
<dbReference type="KEGG" id="apa:APP7_2096"/>
<dbReference type="HOGENOM" id="CLU_032263_2_2_6"/>
<dbReference type="UniPathway" id="UPA01068">
    <property type="reaction ID" value="UER00304"/>
</dbReference>
<dbReference type="UniPathway" id="UPA01068">
    <property type="reaction ID" value="UER00305"/>
</dbReference>
<dbReference type="Proteomes" id="UP000001226">
    <property type="component" value="Chromosome"/>
</dbReference>
<dbReference type="GO" id="GO:0010181">
    <property type="term" value="F:FMN binding"/>
    <property type="evidence" value="ECO:0007669"/>
    <property type="project" value="UniProtKB-UniRule"/>
</dbReference>
<dbReference type="GO" id="GO:0004733">
    <property type="term" value="F:pyridoxamine phosphate oxidase activity"/>
    <property type="evidence" value="ECO:0007669"/>
    <property type="project" value="UniProtKB-UniRule"/>
</dbReference>
<dbReference type="GO" id="GO:0008615">
    <property type="term" value="P:pyridoxine biosynthetic process"/>
    <property type="evidence" value="ECO:0007669"/>
    <property type="project" value="UniProtKB-KW"/>
</dbReference>
<dbReference type="FunFam" id="2.30.110.10:FF:000014">
    <property type="entry name" value="Pyridoxine/pyridoxamine 5'-phosphate oxidase"/>
    <property type="match status" value="1"/>
</dbReference>
<dbReference type="Gene3D" id="2.30.110.10">
    <property type="entry name" value="Electron Transport, Fmn-binding Protein, Chain A"/>
    <property type="match status" value="1"/>
</dbReference>
<dbReference type="HAMAP" id="MF_01629">
    <property type="entry name" value="PdxH"/>
    <property type="match status" value="1"/>
</dbReference>
<dbReference type="InterPro" id="IPR000659">
    <property type="entry name" value="Pyridox_Oxase"/>
</dbReference>
<dbReference type="InterPro" id="IPR019740">
    <property type="entry name" value="Pyridox_Oxase_CS"/>
</dbReference>
<dbReference type="InterPro" id="IPR011576">
    <property type="entry name" value="Pyridox_Oxase_N"/>
</dbReference>
<dbReference type="InterPro" id="IPR019576">
    <property type="entry name" value="Pyridoxamine_oxidase_dimer_C"/>
</dbReference>
<dbReference type="InterPro" id="IPR012349">
    <property type="entry name" value="Split_barrel_FMN-bd"/>
</dbReference>
<dbReference type="NCBIfam" id="TIGR00558">
    <property type="entry name" value="pdxH"/>
    <property type="match status" value="1"/>
</dbReference>
<dbReference type="NCBIfam" id="NF004231">
    <property type="entry name" value="PRK05679.1"/>
    <property type="match status" value="1"/>
</dbReference>
<dbReference type="PANTHER" id="PTHR10851:SF0">
    <property type="entry name" value="PYRIDOXINE-5'-PHOSPHATE OXIDASE"/>
    <property type="match status" value="1"/>
</dbReference>
<dbReference type="PANTHER" id="PTHR10851">
    <property type="entry name" value="PYRIDOXINE-5-PHOSPHATE OXIDASE"/>
    <property type="match status" value="1"/>
</dbReference>
<dbReference type="Pfam" id="PF10590">
    <property type="entry name" value="PNP_phzG_C"/>
    <property type="match status" value="1"/>
</dbReference>
<dbReference type="Pfam" id="PF01243">
    <property type="entry name" value="PNPOx_N"/>
    <property type="match status" value="1"/>
</dbReference>
<dbReference type="PIRSF" id="PIRSF000190">
    <property type="entry name" value="Pyd_amn-ph_oxd"/>
    <property type="match status" value="1"/>
</dbReference>
<dbReference type="SUPFAM" id="SSF50475">
    <property type="entry name" value="FMN-binding split barrel"/>
    <property type="match status" value="1"/>
</dbReference>
<dbReference type="PROSITE" id="PS01064">
    <property type="entry name" value="PYRIDOX_OXIDASE"/>
    <property type="match status" value="1"/>
</dbReference>
<feature type="chain" id="PRO_1000186284" description="Pyridoxine/pyridoxamine 5'-phosphate oxidase">
    <location>
        <begin position="1"/>
        <end position="209"/>
    </location>
</feature>
<feature type="binding site" evidence="1">
    <location>
        <begin position="7"/>
        <end position="10"/>
    </location>
    <ligand>
        <name>substrate</name>
    </ligand>
</feature>
<feature type="binding site" evidence="1">
    <location>
        <begin position="59"/>
        <end position="64"/>
    </location>
    <ligand>
        <name>FMN</name>
        <dbReference type="ChEBI" id="CHEBI:58210"/>
    </ligand>
</feature>
<feature type="binding site" evidence="1">
    <location>
        <position position="64"/>
    </location>
    <ligand>
        <name>substrate</name>
    </ligand>
</feature>
<feature type="binding site" evidence="1">
    <location>
        <begin position="74"/>
        <end position="75"/>
    </location>
    <ligand>
        <name>FMN</name>
        <dbReference type="ChEBI" id="CHEBI:58210"/>
    </ligand>
</feature>
<feature type="binding site" evidence="1">
    <location>
        <position position="80"/>
    </location>
    <ligand>
        <name>FMN</name>
        <dbReference type="ChEBI" id="CHEBI:58210"/>
    </ligand>
</feature>
<feature type="binding site" evidence="1">
    <location>
        <position position="81"/>
    </location>
    <ligand>
        <name>FMN</name>
        <dbReference type="ChEBI" id="CHEBI:58210"/>
    </ligand>
</feature>
<feature type="binding site" evidence="1">
    <location>
        <position position="121"/>
    </location>
    <ligand>
        <name>substrate</name>
    </ligand>
</feature>
<feature type="binding site" evidence="1">
    <location>
        <position position="125"/>
    </location>
    <ligand>
        <name>substrate</name>
    </ligand>
</feature>
<feature type="binding site" evidence="1">
    <location>
        <position position="129"/>
    </location>
    <ligand>
        <name>substrate</name>
    </ligand>
</feature>
<feature type="binding site" evidence="1">
    <location>
        <begin position="138"/>
        <end position="139"/>
    </location>
    <ligand>
        <name>FMN</name>
        <dbReference type="ChEBI" id="CHEBI:58210"/>
    </ligand>
</feature>
<feature type="binding site" evidence="1">
    <location>
        <position position="182"/>
    </location>
    <ligand>
        <name>FMN</name>
        <dbReference type="ChEBI" id="CHEBI:58210"/>
    </ligand>
</feature>
<feature type="binding site" evidence="1">
    <location>
        <begin position="188"/>
        <end position="190"/>
    </location>
    <ligand>
        <name>substrate</name>
    </ligand>
</feature>
<feature type="binding site" evidence="1">
    <location>
        <position position="192"/>
    </location>
    <ligand>
        <name>FMN</name>
        <dbReference type="ChEBI" id="CHEBI:58210"/>
    </ligand>
</feature>
<accession>B3GZF5</accession>
<comment type="function">
    <text evidence="1">Catalyzes the oxidation of either pyridoxine 5'-phosphate (PNP) or pyridoxamine 5'-phosphate (PMP) into pyridoxal 5'-phosphate (PLP).</text>
</comment>
<comment type="catalytic activity">
    <reaction evidence="1">
        <text>pyridoxamine 5'-phosphate + O2 + H2O = pyridoxal 5'-phosphate + H2O2 + NH4(+)</text>
        <dbReference type="Rhea" id="RHEA:15817"/>
        <dbReference type="ChEBI" id="CHEBI:15377"/>
        <dbReference type="ChEBI" id="CHEBI:15379"/>
        <dbReference type="ChEBI" id="CHEBI:16240"/>
        <dbReference type="ChEBI" id="CHEBI:28938"/>
        <dbReference type="ChEBI" id="CHEBI:58451"/>
        <dbReference type="ChEBI" id="CHEBI:597326"/>
        <dbReference type="EC" id="1.4.3.5"/>
    </reaction>
</comment>
<comment type="catalytic activity">
    <reaction evidence="1">
        <text>pyridoxine 5'-phosphate + O2 = pyridoxal 5'-phosphate + H2O2</text>
        <dbReference type="Rhea" id="RHEA:15149"/>
        <dbReference type="ChEBI" id="CHEBI:15379"/>
        <dbReference type="ChEBI" id="CHEBI:16240"/>
        <dbReference type="ChEBI" id="CHEBI:58589"/>
        <dbReference type="ChEBI" id="CHEBI:597326"/>
        <dbReference type="EC" id="1.4.3.5"/>
    </reaction>
</comment>
<comment type="cofactor">
    <cofactor evidence="1">
        <name>FMN</name>
        <dbReference type="ChEBI" id="CHEBI:58210"/>
    </cofactor>
    <text evidence="1">Binds 1 FMN per subunit.</text>
</comment>
<comment type="pathway">
    <text evidence="1">Cofactor metabolism; pyridoxal 5'-phosphate salvage; pyridoxal 5'-phosphate from pyridoxamine 5'-phosphate: step 1/1.</text>
</comment>
<comment type="pathway">
    <text evidence="1">Cofactor metabolism; pyridoxal 5'-phosphate salvage; pyridoxal 5'-phosphate from pyridoxine 5'-phosphate: step 1/1.</text>
</comment>
<comment type="subunit">
    <text evidence="1">Homodimer.</text>
</comment>
<comment type="similarity">
    <text evidence="1">Belongs to the pyridoxamine 5'-phosphate oxidase family.</text>
</comment>
<evidence type="ECO:0000255" key="1">
    <source>
        <dbReference type="HAMAP-Rule" id="MF_01629"/>
    </source>
</evidence>
<sequence>MDLHNIREDYSKQELSQAHCHADPIQQFEQWLEEAITAKANEPTAMNVATVLDGKPTSRIVLLKEVNPNGFVFFTNYQSRKGQAIEQNPYVALTFFWAELERSVRIEGRIEKISAEQSDNYFAGRPYTSRVGAWASNQSQVLSSKSELVAKAALIAAKHPLHVPRPPHWGGYIVLPERIEFWQGRPSRLHDRICYRLVEGAWHKERLSP</sequence>
<proteinExistence type="inferred from homology"/>
<reference key="1">
    <citation type="submission" date="2008-06" db="EMBL/GenBank/DDBJ databases">
        <title>Genome and proteome analysis of A. pleuropneumoniae serotype 7.</title>
        <authorList>
            <person name="Linke B."/>
            <person name="Buettner F."/>
            <person name="Martinez-Arias R."/>
            <person name="Goesmann A."/>
            <person name="Baltes N."/>
            <person name="Tegetmeyer H."/>
            <person name="Singh M."/>
            <person name="Gerlach G.F."/>
        </authorList>
    </citation>
    <scope>NUCLEOTIDE SEQUENCE [LARGE SCALE GENOMIC DNA]</scope>
    <source>
        <strain>AP76</strain>
    </source>
</reference>
<keyword id="KW-0285">Flavoprotein</keyword>
<keyword id="KW-0288">FMN</keyword>
<keyword id="KW-0560">Oxidoreductase</keyword>
<keyword id="KW-0664">Pyridoxine biosynthesis</keyword>
<gene>
    <name evidence="1" type="primary">pdxH</name>
    <name type="ordered locus">APP7_2096</name>
</gene>